<protein>
    <recommendedName>
        <fullName evidence="5">Salivary alpha-glucosidase</fullName>
        <shortName evidence="5">AnGluc</shortName>
        <ecNumber evidence="4">3.2.1.20</ecNumber>
    </recommendedName>
</protein>
<name>MALT_ANOGA</name>
<sequence>MPPLGVLLLLVALGHSTQGHRPLPIRKAHKFDWWERGNFYQIYPRSFKDSDGDGIGDLKGITQTIDYLKTIGIDGVWLSPIFKSPMNDFGYDISDFYAIQEEYGTMEDFEELAAKCASIGLKLILDFVPNHSSDEHEHFRLSEEGIEPYKDYYIWHSGVLDANGTRHPPSNWISVFRGSAWQWSDKRQQYYLHQFQKKQPDLNYRNPALVEEMKNVMRFWLNKGIAGFRIDALPYLFESEEVDGHYRDEPLSGQATDDPDNPAYLTHTETKDQPETYDMVHQWRQVVDEYTARDNFTRIILTEAYTAVQNMTRFYGTPAAPGAQIPFNFQLITLLTVNSTGRDFVNAVQSWTRAMPSGAIANWVLGNHDNSRIASRLGVARADLYNIALQTLPGIAVTYYGEEIAMVDQWISWNDTIDPAACNADPATYELYSRDPVRTPFQWSNGTNAGFSNASRTWLPVADGYRELNVAAQLAAPRSHLKTFMQLTAYRKRRLLAEGNFVLRTVGRDLVMYKRSVPGVGYVVVALNFGPEPATLPVASQFPGTGEHWLKVIASSLQAQPQAGTWINTRLYKLAPDSGIVLERLTGRNDLMT</sequence>
<evidence type="ECO:0000250" key="1">
    <source>
        <dbReference type="UniProtKB" id="P13080"/>
    </source>
</evidence>
<evidence type="ECO:0000255" key="2"/>
<evidence type="ECO:0000255" key="3">
    <source>
        <dbReference type="PROSITE-ProRule" id="PRU00498"/>
    </source>
</evidence>
<evidence type="ECO:0000269" key="4">
    <source>
    </source>
</evidence>
<evidence type="ECO:0000303" key="5">
    <source>
    </source>
</evidence>
<evidence type="ECO:0000305" key="6"/>
<evidence type="ECO:0000312" key="7">
    <source>
        <dbReference type="EMBL" id="EAA00998.3"/>
    </source>
</evidence>
<evidence type="ECO:0000312" key="8">
    <source>
        <dbReference type="EnsemblMetazoa" id="AGAP002102-PA"/>
    </source>
</evidence>
<evidence type="ECO:0000312" key="9">
    <source>
        <dbReference type="Proteomes" id="UP000007062"/>
    </source>
</evidence>
<organism evidence="7">
    <name type="scientific">Anopheles gambiae</name>
    <name type="common">African malaria mosquito</name>
    <dbReference type="NCBI Taxonomy" id="7165"/>
    <lineage>
        <taxon>Eukaryota</taxon>
        <taxon>Metazoa</taxon>
        <taxon>Ecdysozoa</taxon>
        <taxon>Arthropoda</taxon>
        <taxon>Hexapoda</taxon>
        <taxon>Insecta</taxon>
        <taxon>Pterygota</taxon>
        <taxon>Neoptera</taxon>
        <taxon>Endopterygota</taxon>
        <taxon>Diptera</taxon>
        <taxon>Nematocera</taxon>
        <taxon>Culicoidea</taxon>
        <taxon>Culicidae</taxon>
        <taxon>Anophelinae</taxon>
        <taxon>Anopheles</taxon>
    </lineage>
</organism>
<gene>
    <name evidence="1" type="primary">MAL1</name>
    <name evidence="7" type="ORF">AgaP_AGAP002102</name>
</gene>
<dbReference type="EC" id="3.2.1.20" evidence="4"/>
<dbReference type="EMBL" id="AAAB01008987">
    <property type="protein sequence ID" value="EAA00998.3"/>
    <property type="molecule type" value="Genomic_DNA"/>
</dbReference>
<dbReference type="RefSeq" id="XP_320938.3">
    <property type="nucleotide sequence ID" value="XM_320938.4"/>
</dbReference>
<dbReference type="SMR" id="Q7PYT9"/>
<dbReference type="STRING" id="7165.Q7PYT9"/>
<dbReference type="PaxDb" id="7165-AGAP002102-PA"/>
<dbReference type="EnsemblMetazoa" id="AGAP002102-RA">
    <property type="protein sequence ID" value="AGAP002102-PA"/>
    <property type="gene ID" value="AGAP002102"/>
</dbReference>
<dbReference type="KEGG" id="aga:1281368"/>
<dbReference type="VEuPathDB" id="VectorBase:AGAMI1_006676"/>
<dbReference type="VEuPathDB" id="VectorBase:AGAP002102"/>
<dbReference type="eggNOG" id="KOG0471">
    <property type="taxonomic scope" value="Eukaryota"/>
</dbReference>
<dbReference type="HOGENOM" id="CLU_006462_8_3_1"/>
<dbReference type="OMA" id="NWQSHFG"/>
<dbReference type="OrthoDB" id="3680211at2759"/>
<dbReference type="Proteomes" id="UP000007062">
    <property type="component" value="Chromosome 2R"/>
</dbReference>
<dbReference type="GO" id="GO:0005615">
    <property type="term" value="C:extracellular space"/>
    <property type="evidence" value="ECO:0000314"/>
    <property type="project" value="UniProtKB"/>
</dbReference>
<dbReference type="GO" id="GO:0005975">
    <property type="term" value="P:carbohydrate metabolic process"/>
    <property type="evidence" value="ECO:0007669"/>
    <property type="project" value="InterPro"/>
</dbReference>
<dbReference type="CDD" id="cd11328">
    <property type="entry name" value="AmyAc_maltase"/>
    <property type="match status" value="1"/>
</dbReference>
<dbReference type="FunFam" id="3.90.400.10:FF:000001">
    <property type="entry name" value="Maltase A3, isoform A"/>
    <property type="match status" value="1"/>
</dbReference>
<dbReference type="Gene3D" id="3.20.20.80">
    <property type="entry name" value="Glycosidases"/>
    <property type="match status" value="1"/>
</dbReference>
<dbReference type="Gene3D" id="3.90.400.10">
    <property type="entry name" value="Oligo-1,6-glucosidase, Domain 2"/>
    <property type="match status" value="1"/>
</dbReference>
<dbReference type="InterPro" id="IPR006047">
    <property type="entry name" value="Glyco_hydro_13_cat_dom"/>
</dbReference>
<dbReference type="InterPro" id="IPR017853">
    <property type="entry name" value="Glycoside_hydrolase_SF"/>
</dbReference>
<dbReference type="InterPro" id="IPR045857">
    <property type="entry name" value="O16G_dom_2"/>
</dbReference>
<dbReference type="PANTHER" id="PTHR10357">
    <property type="entry name" value="ALPHA-AMYLASE FAMILY MEMBER"/>
    <property type="match status" value="1"/>
</dbReference>
<dbReference type="PANTHER" id="PTHR10357:SF233">
    <property type="entry name" value="MALTASE A1"/>
    <property type="match status" value="1"/>
</dbReference>
<dbReference type="Pfam" id="PF00128">
    <property type="entry name" value="Alpha-amylase"/>
    <property type="match status" value="1"/>
</dbReference>
<dbReference type="SMART" id="SM00642">
    <property type="entry name" value="Aamy"/>
    <property type="match status" value="1"/>
</dbReference>
<dbReference type="SUPFAM" id="SSF51445">
    <property type="entry name" value="(Trans)glycosidases"/>
    <property type="match status" value="1"/>
</dbReference>
<reference evidence="9" key="1">
    <citation type="journal article" date="2002" name="Science">
        <title>The genome sequence of the malaria mosquito Anopheles gambiae.</title>
        <authorList>
            <person name="Holt R.A."/>
            <person name="Subramanian G.M."/>
            <person name="Halpern A."/>
            <person name="Sutton G.G."/>
            <person name="Charlab R."/>
            <person name="Nusskern D.R."/>
            <person name="Wincker P."/>
            <person name="Clark A.G."/>
            <person name="Ribeiro J.M.C."/>
            <person name="Wides R."/>
            <person name="Salzberg S.L."/>
            <person name="Loftus B.J."/>
            <person name="Yandell M.D."/>
            <person name="Majoros W.H."/>
            <person name="Rusch D.B."/>
            <person name="Lai Z."/>
            <person name="Kraft C.L."/>
            <person name="Abril J.F."/>
            <person name="Anthouard V."/>
            <person name="Arensburger P."/>
            <person name="Atkinson P.W."/>
            <person name="Baden H."/>
            <person name="de Berardinis V."/>
            <person name="Baldwin D."/>
            <person name="Benes V."/>
            <person name="Biedler J."/>
            <person name="Blass C."/>
            <person name="Bolanos R."/>
            <person name="Boscus D."/>
            <person name="Barnstead M."/>
            <person name="Cai S."/>
            <person name="Center A."/>
            <person name="Chaturverdi K."/>
            <person name="Christophides G.K."/>
            <person name="Chrystal M.A.M."/>
            <person name="Clamp M."/>
            <person name="Cravchik A."/>
            <person name="Curwen V."/>
            <person name="Dana A."/>
            <person name="Delcher A."/>
            <person name="Dew I."/>
            <person name="Evans C.A."/>
            <person name="Flanigan M."/>
            <person name="Grundschober-Freimoser A."/>
            <person name="Friedli L."/>
            <person name="Gu Z."/>
            <person name="Guan P."/>
            <person name="Guigo R."/>
            <person name="Hillenmeyer M.E."/>
            <person name="Hladun S.L."/>
            <person name="Hogan J.R."/>
            <person name="Hong Y.S."/>
            <person name="Hoover J."/>
            <person name="Jaillon O."/>
            <person name="Ke Z."/>
            <person name="Kodira C.D."/>
            <person name="Kokoza E."/>
            <person name="Koutsos A."/>
            <person name="Letunic I."/>
            <person name="Levitsky A.A."/>
            <person name="Liang Y."/>
            <person name="Lin J.-J."/>
            <person name="Lobo N.F."/>
            <person name="Lopez J.R."/>
            <person name="Malek J.A."/>
            <person name="McIntosh T.C."/>
            <person name="Meister S."/>
            <person name="Miller J.R."/>
            <person name="Mobarry C."/>
            <person name="Mongin E."/>
            <person name="Murphy S.D."/>
            <person name="O'Brochta D.A."/>
            <person name="Pfannkoch C."/>
            <person name="Qi R."/>
            <person name="Regier M.A."/>
            <person name="Remington K."/>
            <person name="Shao H."/>
            <person name="Sharakhova M.V."/>
            <person name="Sitter C.D."/>
            <person name="Shetty J."/>
            <person name="Smith T.J."/>
            <person name="Strong R."/>
            <person name="Sun J."/>
            <person name="Thomasova D."/>
            <person name="Ton L.Q."/>
            <person name="Topalis P."/>
            <person name="Tu Z.J."/>
            <person name="Unger M.F."/>
            <person name="Walenz B."/>
            <person name="Wang A.H."/>
            <person name="Wang J."/>
            <person name="Wang M."/>
            <person name="Wang X."/>
            <person name="Woodford K.J."/>
            <person name="Wortman J.R."/>
            <person name="Wu M."/>
            <person name="Yao A."/>
            <person name="Zdobnov E.M."/>
            <person name="Zhang H."/>
            <person name="Zhao Q."/>
            <person name="Zhao S."/>
            <person name="Zhu S.C."/>
            <person name="Zhimulev I."/>
            <person name="Coluzzi M."/>
            <person name="della Torre A."/>
            <person name="Roth C.W."/>
            <person name="Louis C."/>
            <person name="Kalush F."/>
            <person name="Mural R.J."/>
            <person name="Myers E.W."/>
            <person name="Adams M.D."/>
            <person name="Smith H.O."/>
            <person name="Broder S."/>
            <person name="Gardner M.J."/>
            <person name="Fraser C.M."/>
            <person name="Birney E."/>
            <person name="Bork P."/>
            <person name="Brey P.T."/>
            <person name="Venter J.C."/>
            <person name="Weissenbach J."/>
            <person name="Kafatos F.C."/>
            <person name="Collins F.H."/>
            <person name="Hoffman S.L."/>
        </authorList>
    </citation>
    <scope>NUCLEOTIDE SEQUENCE [LARGE SCALE GENOMIC DNA]</scope>
    <source>
        <strain evidence="9">PEST</strain>
    </source>
</reference>
<reference evidence="8" key="2">
    <citation type="journal article" date="2004" name="Trends Parasitol.">
        <title>The Anopheles gambiae genome: an update.</title>
        <authorList>
            <person name="Mongin E."/>
            <person name="Louis C."/>
            <person name="Holt R.A."/>
            <person name="Birney E."/>
            <person name="Collins F.H."/>
        </authorList>
    </citation>
    <scope>NUCLEOTIDE SEQUENCE [LARGE SCALE GENOMIC DNA]</scope>
    <source>
        <strain evidence="8">PEST</strain>
    </source>
</reference>
<reference evidence="7" key="3">
    <citation type="journal article" date="2007" name="Genome Biol.">
        <title>Update of the Anopheles gambiae PEST genome assembly.</title>
        <authorList>
            <person name="Sharakhova M.V."/>
            <person name="Hammond M.P."/>
            <person name="Lobo N.F."/>
            <person name="Krzywinski J."/>
            <person name="Unger M.F."/>
            <person name="Hillenmeyer M.E."/>
            <person name="Bruggner R.V."/>
            <person name="Birney E."/>
            <person name="Collins F.H."/>
        </authorList>
    </citation>
    <scope>NUCLEOTIDE SEQUENCE [LARGE SCALE GENOMIC DNA]</scope>
    <source>
        <strain evidence="7">PEST</strain>
    </source>
</reference>
<reference evidence="6" key="4">
    <citation type="journal article" date="2024" name="Insect Biochem. Mol. Biol.">
        <title>Structural and functional comparisons of salivary alpha-glucosidases from the mosquito vectors Aedes aegypti, Anopheles gambiae, and Culex quinquefasciatus.</title>
        <authorList>
            <person name="Williams A.E."/>
            <person name="Gittis A.G."/>
            <person name="Botello K."/>
            <person name="Cruz P."/>
            <person name="Martin-Martin I."/>
            <person name="Valenzuela Leon P.C."/>
            <person name="Sumner B."/>
            <person name="Bonilla B."/>
            <person name="Calvo E."/>
        </authorList>
    </citation>
    <scope>FUNCTION</scope>
    <scope>CATALYTIC ACTIVITY</scope>
    <scope>BIOPHYSICOCHEMICAL PROPERTIES</scope>
    <scope>SUBCELLULAR LOCATION</scope>
    <scope>TISSUE SPECIFICITY</scope>
</reference>
<feature type="signal peptide" evidence="2">
    <location>
        <begin position="1"/>
        <end position="19"/>
    </location>
</feature>
<feature type="chain" id="PRO_5014588007" description="Salivary alpha-glucosidase" evidence="2">
    <location>
        <begin position="20"/>
        <end position="593"/>
    </location>
</feature>
<feature type="binding site" evidence="1">
    <location>
        <position position="49"/>
    </location>
    <ligand>
        <name>Ca(2+)</name>
        <dbReference type="ChEBI" id="CHEBI:29108"/>
        <label>1</label>
    </ligand>
</feature>
<feature type="binding site" evidence="1">
    <location>
        <position position="51"/>
    </location>
    <ligand>
        <name>Ca(2+)</name>
        <dbReference type="ChEBI" id="CHEBI:29108"/>
        <label>1</label>
    </ligand>
</feature>
<feature type="binding site" evidence="1">
    <location>
        <position position="53"/>
    </location>
    <ligand>
        <name>Ca(2+)</name>
        <dbReference type="ChEBI" id="CHEBI:29108"/>
        <label>1</label>
    </ligand>
</feature>
<feature type="binding site" evidence="1">
    <location>
        <position position="55"/>
    </location>
    <ligand>
        <name>Ca(2+)</name>
        <dbReference type="ChEBI" id="CHEBI:29108"/>
        <label>1</label>
    </ligand>
</feature>
<feature type="binding site" evidence="1">
    <location>
        <position position="57"/>
    </location>
    <ligand>
        <name>Ca(2+)</name>
        <dbReference type="ChEBI" id="CHEBI:29108"/>
        <label>1</label>
    </ligand>
</feature>
<feature type="binding site" evidence="1">
    <location>
        <position position="130"/>
    </location>
    <ligand>
        <name>Ca(2+)</name>
        <dbReference type="ChEBI" id="CHEBI:29108"/>
        <label>2</label>
    </ligand>
</feature>
<feature type="binding site" evidence="1">
    <location>
        <position position="201"/>
    </location>
    <ligand>
        <name>Ca(2+)</name>
        <dbReference type="ChEBI" id="CHEBI:29108"/>
        <label>2</label>
    </ligand>
</feature>
<feature type="binding site" evidence="1">
    <location>
        <position position="235"/>
    </location>
    <ligand>
        <name>Ca(2+)</name>
        <dbReference type="ChEBI" id="CHEBI:29108"/>
        <label>2</label>
    </ligand>
</feature>
<feature type="binding site" evidence="1">
    <location>
        <position position="236"/>
    </location>
    <ligand>
        <name>Ca(2+)</name>
        <dbReference type="ChEBI" id="CHEBI:29108"/>
        <label>2</label>
    </ligand>
</feature>
<feature type="binding site" evidence="1">
    <location>
        <position position="238"/>
    </location>
    <ligand>
        <name>Ca(2+)</name>
        <dbReference type="ChEBI" id="CHEBI:29108"/>
        <label>2</label>
    </ligand>
</feature>
<feature type="binding site" evidence="1">
    <location>
        <position position="338"/>
    </location>
    <ligand>
        <name>N-acetyl-beta-D-glucosamine</name>
        <dbReference type="ChEBI" id="CHEBI:28009"/>
    </ligand>
</feature>
<feature type="glycosylation site" description="N-linked (GlcNAc...) asparagine" evidence="3">
    <location>
        <position position="130"/>
    </location>
</feature>
<feature type="glycosylation site" description="N-linked (GlcNAc...) asparagine" evidence="3">
    <location>
        <position position="163"/>
    </location>
</feature>
<feature type="glycosylation site" description="N-linked (GlcNAc...) asparagine" evidence="3">
    <location>
        <position position="295"/>
    </location>
</feature>
<feature type="glycosylation site" description="N-linked (GlcNAc...) asparagine" evidence="3">
    <location>
        <position position="310"/>
    </location>
</feature>
<feature type="glycosylation site" description="N-linked (GlcNAc...) asparagine" evidence="3">
    <location>
        <position position="338"/>
    </location>
</feature>
<feature type="glycosylation site" description="N-linked (GlcNAc...) asparagine" evidence="3">
    <location>
        <position position="414"/>
    </location>
</feature>
<feature type="glycosylation site" description="N-linked (GlcNAc...) asparagine" evidence="3">
    <location>
        <position position="445"/>
    </location>
</feature>
<feature type="glycosylation site" description="N-linked (GlcNAc...) asparagine" evidence="3">
    <location>
        <position position="453"/>
    </location>
</feature>
<comment type="function">
    <text evidence="4 5">Functions as a glucosidase that shows high activity toward sucrose, a major component of nectar (PubMed:38428508). Assists the mosquito in its sugar-feeding capabilities (PubMed:38428508).</text>
</comment>
<comment type="catalytic activity">
    <reaction evidence="4">
        <text>Hydrolysis of terminal, non-reducing (1-&gt;4)-linked alpha-D-glucose residues with release of alpha-D-glucose.</text>
        <dbReference type="EC" id="3.2.1.20"/>
    </reaction>
</comment>
<comment type="biophysicochemical properties">
    <kinetics>
        <KM evidence="4">20.4 mM for sucrose</KM>
        <text evidence="4">kcat is 48.9 min(-1) with sucrose as substrate.</text>
    </kinetics>
</comment>
<comment type="subcellular location">
    <subcellularLocation>
        <location evidence="4">Secreted</location>
    </subcellularLocation>
</comment>
<comment type="tissue specificity">
    <text evidence="4">Saliva (at protein level) (PubMed:38428508). Proximal lateral lobes of the salivary gland (at protein level) (PubMed:38428508).</text>
</comment>
<comment type="similarity">
    <text evidence="6">Belongs to the glycosyl hydrolase 13 family.</text>
</comment>
<accession>Q7PYT9</accession>
<proteinExistence type="evidence at protein level"/>
<keyword id="KW-0106">Calcium</keyword>
<keyword id="KW-0325">Glycoprotein</keyword>
<keyword id="KW-0326">Glycosidase</keyword>
<keyword id="KW-0378">Hydrolase</keyword>
<keyword id="KW-0479">Metal-binding</keyword>
<keyword id="KW-1185">Reference proteome</keyword>
<keyword id="KW-0964">Secreted</keyword>
<keyword id="KW-0732">Signal</keyword>